<name>RAP1B_BOVIN</name>
<accession>P61223</accession>
<accession>P09526</accession>
<accession>Q3T0M4</accession>
<reference key="1">
    <citation type="journal article" date="1990" name="Biochem. Biophys. Res. Commun.">
        <title>Molecular cloning of smg p21B and identification of smg p21 purified from bovine brain and human platelets as smg p21B.</title>
        <authorList>
            <person name="Matsui Y."/>
            <person name="Kikuchi A."/>
            <person name="Kawata M."/>
            <person name="Kondo J."/>
            <person name="Teranishi Y."/>
            <person name="Takai Y."/>
        </authorList>
    </citation>
    <scope>NUCLEOTIDE SEQUENCE [MRNA]</scope>
    <source>
        <tissue>Brain</tissue>
    </source>
</reference>
<reference key="2">
    <citation type="submission" date="2005-08" db="EMBL/GenBank/DDBJ databases">
        <authorList>
            <consortium name="NIH - Mammalian Gene Collection (MGC) project"/>
        </authorList>
    </citation>
    <scope>NUCLEOTIDE SEQUENCE [LARGE SCALE MRNA]</scope>
    <source>
        <strain>Crossbred X Angus</strain>
        <tissue>Ileum</tissue>
    </source>
</reference>
<organism>
    <name type="scientific">Bos taurus</name>
    <name type="common">Bovine</name>
    <dbReference type="NCBI Taxonomy" id="9913"/>
    <lineage>
        <taxon>Eukaryota</taxon>
        <taxon>Metazoa</taxon>
        <taxon>Chordata</taxon>
        <taxon>Craniata</taxon>
        <taxon>Vertebrata</taxon>
        <taxon>Euteleostomi</taxon>
        <taxon>Mammalia</taxon>
        <taxon>Eutheria</taxon>
        <taxon>Laurasiatheria</taxon>
        <taxon>Artiodactyla</taxon>
        <taxon>Ruminantia</taxon>
        <taxon>Pecora</taxon>
        <taxon>Bovidae</taxon>
        <taxon>Bovinae</taxon>
        <taxon>Bos</taxon>
    </lineage>
</organism>
<comment type="function">
    <text evidence="2">GTP-binding protein that possesses intrinsic GTPase activity. Contributes to the polarizing activity of KRIT1 and CDH5 in the establishment and maintenance of correct endothelial cell polarity and vascular lumen. Required for the localization of phosphorylated PRKCZ, PARD3 and TIAM1 to the cell junction. Plays a role in the establishment of basal endothelial barrier function (By similarity).</text>
</comment>
<comment type="catalytic activity">
    <reaction evidence="2">
        <text>GTP + H2O = GDP + phosphate + H(+)</text>
        <dbReference type="Rhea" id="RHEA:19669"/>
        <dbReference type="ChEBI" id="CHEBI:15377"/>
        <dbReference type="ChEBI" id="CHEBI:15378"/>
        <dbReference type="ChEBI" id="CHEBI:37565"/>
        <dbReference type="ChEBI" id="CHEBI:43474"/>
        <dbReference type="ChEBI" id="CHEBI:58189"/>
        <dbReference type="EC" id="3.6.5.2"/>
    </reaction>
</comment>
<comment type="activity regulation">
    <text evidence="2">Activated by guanine nucleotide-exchange factor (GEF) EPAC2 in a cAMP-dependent manner.</text>
</comment>
<comment type="subunit">
    <text evidence="2">Heterodimer with RAP1GAP (By similarity). Interacts with EPAC2 (By similarity). Interacts with SGSM1 (By similarity). Interacts with SGSM2 (By similarity). Interacts with SGSM3 (By similarity). Interacts with KRIT1 (By similarity). Interacts with RAP1GDS1 (By similarity).</text>
</comment>
<comment type="subcellular location">
    <subcellularLocation>
        <location evidence="2">Cell membrane</location>
    </subcellularLocation>
    <subcellularLocation>
        <location evidence="2">Cytoplasm</location>
        <location evidence="2">Cytosol</location>
    </subcellularLocation>
    <subcellularLocation>
        <location evidence="2">Cell junction</location>
    </subcellularLocation>
    <text evidence="2">May shuttle between plasma membrane and cytosol (By similarity). Presence of KRIT1 and CDH5 is required for its localization to the cell junction (By similarity).</text>
</comment>
<protein>
    <recommendedName>
        <fullName>Ras-related protein Rap-1b</fullName>
        <ecNumber evidence="2">3.6.5.2</ecNumber>
    </recommendedName>
    <alternativeName>
        <fullName>GTP-binding protein smg p21B</fullName>
    </alternativeName>
</protein>
<keyword id="KW-0965">Cell junction</keyword>
<keyword id="KW-1003">Cell membrane</keyword>
<keyword id="KW-0963">Cytoplasm</keyword>
<keyword id="KW-0342">GTP-binding</keyword>
<keyword id="KW-0378">Hydrolase</keyword>
<keyword id="KW-0449">Lipoprotein</keyword>
<keyword id="KW-0472">Membrane</keyword>
<keyword id="KW-0488">Methylation</keyword>
<keyword id="KW-0547">Nucleotide-binding</keyword>
<keyword id="KW-0597">Phosphoprotein</keyword>
<keyword id="KW-0636">Prenylation</keyword>
<keyword id="KW-1185">Reference proteome</keyword>
<proteinExistence type="evidence at transcript level"/>
<gene>
    <name type="primary">RAP1B</name>
</gene>
<evidence type="ECO:0000250" key="1"/>
<evidence type="ECO:0000250" key="2">
    <source>
        <dbReference type="UniProtKB" id="P61224"/>
    </source>
</evidence>
<evidence type="ECO:0000305" key="3"/>
<feature type="chain" id="PRO_0000030207" description="Ras-related protein Rap-1b">
    <location>
        <begin position="1"/>
        <end position="181"/>
    </location>
</feature>
<feature type="propeptide" id="PRO_0000030208" description="Removed in mature form" evidence="1">
    <location>
        <begin position="182"/>
        <end position="184"/>
    </location>
</feature>
<feature type="region of interest" description="Interaction with KRIT1" evidence="2">
    <location>
        <begin position="25"/>
        <end position="67"/>
    </location>
</feature>
<feature type="short sequence motif" description="Effector region" evidence="3">
    <location>
        <begin position="32"/>
        <end position="40"/>
    </location>
</feature>
<feature type="binding site" evidence="2">
    <location>
        <begin position="10"/>
        <end position="18"/>
    </location>
    <ligand>
        <name>GTP</name>
        <dbReference type="ChEBI" id="CHEBI:37565"/>
    </ligand>
</feature>
<feature type="binding site" evidence="2">
    <location>
        <begin position="57"/>
        <end position="61"/>
    </location>
    <ligand>
        <name>GTP</name>
        <dbReference type="ChEBI" id="CHEBI:37565"/>
    </ligand>
</feature>
<feature type="binding site" evidence="2">
    <location>
        <begin position="116"/>
        <end position="119"/>
    </location>
    <ligand>
        <name>GTP</name>
        <dbReference type="ChEBI" id="CHEBI:37565"/>
    </ligand>
</feature>
<feature type="binding site" evidence="2">
    <location>
        <begin position="147"/>
        <end position="149"/>
    </location>
    <ligand>
        <name>GTP</name>
        <dbReference type="ChEBI" id="CHEBI:37565"/>
    </ligand>
</feature>
<feature type="modified residue" description="Phosphoserine; by PKA" evidence="2">
    <location>
        <position position="179"/>
    </location>
</feature>
<feature type="modified residue" description="Cysteine methyl ester" evidence="2">
    <location>
        <position position="181"/>
    </location>
</feature>
<feature type="lipid moiety-binding region" description="S-geranylgeranyl cysteine" evidence="2">
    <location>
        <position position="181"/>
    </location>
</feature>
<dbReference type="EC" id="3.6.5.2" evidence="2"/>
<dbReference type="EMBL" id="M33141">
    <property type="protein sequence ID" value="AAA30763.1"/>
    <property type="molecule type" value="mRNA"/>
</dbReference>
<dbReference type="EMBL" id="BC102330">
    <property type="protein sequence ID" value="AAI02331.1"/>
    <property type="molecule type" value="mRNA"/>
</dbReference>
<dbReference type="PIR" id="A34655">
    <property type="entry name" value="A34655"/>
</dbReference>
<dbReference type="RefSeq" id="NP_787018.1">
    <property type="nucleotide sequence ID" value="NM_175824.2"/>
</dbReference>
<dbReference type="RefSeq" id="XP_005206506.1">
    <property type="nucleotide sequence ID" value="XM_005206449.5"/>
</dbReference>
<dbReference type="RefSeq" id="XP_010803385.1">
    <property type="nucleotide sequence ID" value="XM_010805083.1"/>
</dbReference>
<dbReference type="RefSeq" id="XP_010803386.1">
    <property type="nucleotide sequence ID" value="XM_010805084.4"/>
</dbReference>
<dbReference type="RefSeq" id="XP_024847169.1">
    <property type="nucleotide sequence ID" value="XM_024991401.2"/>
</dbReference>
<dbReference type="RefSeq" id="XP_059742119.1">
    <property type="nucleotide sequence ID" value="XM_059886136.1"/>
</dbReference>
<dbReference type="SMR" id="P61223"/>
<dbReference type="FunCoup" id="P61223">
    <property type="interactions" value="3671"/>
</dbReference>
<dbReference type="STRING" id="9913.ENSBTAP00000011803"/>
<dbReference type="iPTMnet" id="P61223"/>
<dbReference type="PaxDb" id="9913-ENSBTAP00000011803"/>
<dbReference type="PeptideAtlas" id="P61223"/>
<dbReference type="Ensembl" id="ENSBTAT00000011803.4">
    <property type="protein sequence ID" value="ENSBTAP00000011803.3"/>
    <property type="gene ID" value="ENSBTAG00000008967.6"/>
</dbReference>
<dbReference type="GeneID" id="327708"/>
<dbReference type="KEGG" id="bta:327708"/>
<dbReference type="CTD" id="5908"/>
<dbReference type="VEuPathDB" id="HostDB:ENSBTAG00000008967"/>
<dbReference type="eggNOG" id="KOG0395">
    <property type="taxonomic scope" value="Eukaryota"/>
</dbReference>
<dbReference type="GeneTree" id="ENSGT00940000154429"/>
<dbReference type="HOGENOM" id="CLU_041217_9_8_1"/>
<dbReference type="InParanoid" id="P61223"/>
<dbReference type="OMA" id="MPLREFK"/>
<dbReference type="OrthoDB" id="5976022at2759"/>
<dbReference type="TreeFam" id="TF313014"/>
<dbReference type="Reactome" id="R-BTA-354192">
    <property type="pathway name" value="Integrin signaling"/>
</dbReference>
<dbReference type="Reactome" id="R-BTA-354194">
    <property type="pathway name" value="GRB2:SOS provides linkage to MAPK signaling for Integrins"/>
</dbReference>
<dbReference type="Reactome" id="R-BTA-372708">
    <property type="pathway name" value="p130Cas linkage to MAPK signaling for integrins"/>
</dbReference>
<dbReference type="Reactome" id="R-BTA-392517">
    <property type="pathway name" value="Rap1 signalling"/>
</dbReference>
<dbReference type="Reactome" id="R-BTA-5674135">
    <property type="pathway name" value="MAP2K and MAPK activation"/>
</dbReference>
<dbReference type="Reactome" id="R-BTA-6798695">
    <property type="pathway name" value="Neutrophil degranulation"/>
</dbReference>
<dbReference type="Reactome" id="R-BTA-8875555">
    <property type="pathway name" value="MET activates RAP1 and RAC1"/>
</dbReference>
<dbReference type="Proteomes" id="UP000009136">
    <property type="component" value="Chromosome 5"/>
</dbReference>
<dbReference type="Bgee" id="ENSBTAG00000008967">
    <property type="expression patterns" value="Expressed in neutrophil and 109 other cell types or tissues"/>
</dbReference>
<dbReference type="GO" id="GO:0005911">
    <property type="term" value="C:cell-cell junction"/>
    <property type="evidence" value="ECO:0000250"/>
    <property type="project" value="UniProtKB"/>
</dbReference>
<dbReference type="GO" id="GO:0005829">
    <property type="term" value="C:cytosol"/>
    <property type="evidence" value="ECO:0007669"/>
    <property type="project" value="UniProtKB-SubCell"/>
</dbReference>
<dbReference type="GO" id="GO:0016020">
    <property type="term" value="C:membrane"/>
    <property type="evidence" value="ECO:0000304"/>
    <property type="project" value="UniProtKB"/>
</dbReference>
<dbReference type="GO" id="GO:0005886">
    <property type="term" value="C:plasma membrane"/>
    <property type="evidence" value="ECO:0000318"/>
    <property type="project" value="GO_Central"/>
</dbReference>
<dbReference type="GO" id="GO:0003925">
    <property type="term" value="F:G protein activity"/>
    <property type="evidence" value="ECO:0007669"/>
    <property type="project" value="UniProtKB-EC"/>
</dbReference>
<dbReference type="GO" id="GO:0019003">
    <property type="term" value="F:GDP binding"/>
    <property type="evidence" value="ECO:0000250"/>
    <property type="project" value="UniProtKB"/>
</dbReference>
<dbReference type="GO" id="GO:0005525">
    <property type="term" value="F:GTP binding"/>
    <property type="evidence" value="ECO:0000250"/>
    <property type="project" value="UniProtKB"/>
</dbReference>
<dbReference type="GO" id="GO:0003924">
    <property type="term" value="F:GTPase activity"/>
    <property type="evidence" value="ECO:0000250"/>
    <property type="project" value="UniProtKB"/>
</dbReference>
<dbReference type="GO" id="GO:0071320">
    <property type="term" value="P:cellular response to cAMP"/>
    <property type="evidence" value="ECO:0000250"/>
    <property type="project" value="UniProtKB"/>
</dbReference>
<dbReference type="GO" id="GO:0061028">
    <property type="term" value="P:establishment of endothelial barrier"/>
    <property type="evidence" value="ECO:0000250"/>
    <property type="project" value="UniProtKB"/>
</dbReference>
<dbReference type="GO" id="GO:2000301">
    <property type="term" value="P:negative regulation of synaptic vesicle exocytosis"/>
    <property type="evidence" value="ECO:0000318"/>
    <property type="project" value="GO_Central"/>
</dbReference>
<dbReference type="GO" id="GO:0032486">
    <property type="term" value="P:Rap protein signal transduction"/>
    <property type="evidence" value="ECO:0000250"/>
    <property type="project" value="UniProtKB"/>
</dbReference>
<dbReference type="GO" id="GO:1901888">
    <property type="term" value="P:regulation of cell junction assembly"/>
    <property type="evidence" value="ECO:0000250"/>
    <property type="project" value="UniProtKB"/>
</dbReference>
<dbReference type="GO" id="GO:2000114">
    <property type="term" value="P:regulation of establishment of cell polarity"/>
    <property type="evidence" value="ECO:0000250"/>
    <property type="project" value="UniProtKB"/>
</dbReference>
<dbReference type="CDD" id="cd04175">
    <property type="entry name" value="Rap1"/>
    <property type="match status" value="1"/>
</dbReference>
<dbReference type="FunFam" id="3.40.50.300:FF:000182">
    <property type="entry name" value="ras-related protein Rap-1b"/>
    <property type="match status" value="1"/>
</dbReference>
<dbReference type="Gene3D" id="3.40.50.300">
    <property type="entry name" value="P-loop containing nucleotide triphosphate hydrolases"/>
    <property type="match status" value="1"/>
</dbReference>
<dbReference type="InterPro" id="IPR027417">
    <property type="entry name" value="P-loop_NTPase"/>
</dbReference>
<dbReference type="InterPro" id="IPR038851">
    <property type="entry name" value="Rap1"/>
</dbReference>
<dbReference type="InterPro" id="IPR005225">
    <property type="entry name" value="Small_GTP-bd"/>
</dbReference>
<dbReference type="InterPro" id="IPR001806">
    <property type="entry name" value="Small_GTPase"/>
</dbReference>
<dbReference type="InterPro" id="IPR020849">
    <property type="entry name" value="Small_GTPase_Ras-type"/>
</dbReference>
<dbReference type="NCBIfam" id="TIGR00231">
    <property type="entry name" value="small_GTP"/>
    <property type="match status" value="1"/>
</dbReference>
<dbReference type="PANTHER" id="PTHR24070">
    <property type="entry name" value="RAS, DI-RAS, AND RHEB FAMILY MEMBERS OF SMALL GTPASE SUPERFAMILY"/>
    <property type="match status" value="1"/>
</dbReference>
<dbReference type="Pfam" id="PF00071">
    <property type="entry name" value="Ras"/>
    <property type="match status" value="1"/>
</dbReference>
<dbReference type="PRINTS" id="PR00449">
    <property type="entry name" value="RASTRNSFRMNG"/>
</dbReference>
<dbReference type="SMART" id="SM00175">
    <property type="entry name" value="RAB"/>
    <property type="match status" value="1"/>
</dbReference>
<dbReference type="SMART" id="SM00176">
    <property type="entry name" value="RAN"/>
    <property type="match status" value="1"/>
</dbReference>
<dbReference type="SMART" id="SM00173">
    <property type="entry name" value="RAS"/>
    <property type="match status" value="1"/>
</dbReference>
<dbReference type="SMART" id="SM00174">
    <property type="entry name" value="RHO"/>
    <property type="match status" value="1"/>
</dbReference>
<dbReference type="SUPFAM" id="SSF52540">
    <property type="entry name" value="P-loop containing nucleoside triphosphate hydrolases"/>
    <property type="match status" value="1"/>
</dbReference>
<dbReference type="PROSITE" id="PS51421">
    <property type="entry name" value="RAS"/>
    <property type="match status" value="1"/>
</dbReference>
<sequence length="184" mass="20825">MREYKLVVLGSGGVGKSALTVQFVQGIFVEKYDPTIEDSYRKQVEVDAQQCMLEILDTAGTEQFTAMRDLYMKNGQGFALVYSITAQSTFNDLQDLREQILRVKDTDDVPMILVGNKCDLEDERVVGKEQGQNLARQWNNCAFLESSAKSKINVNEIFYDLVRQINRKTPVPGKARKKSSCQLL</sequence>